<keyword id="KW-0687">Ribonucleoprotein</keyword>
<keyword id="KW-0689">Ribosomal protein</keyword>
<keyword id="KW-0694">RNA-binding</keyword>
<keyword id="KW-0699">rRNA-binding</keyword>
<dbReference type="EMBL" id="CP000805">
    <property type="protein sequence ID" value="ACD70618.1"/>
    <property type="molecule type" value="Genomic_DNA"/>
</dbReference>
<dbReference type="RefSeq" id="WP_010881639.1">
    <property type="nucleotide sequence ID" value="NC_021508.1"/>
</dbReference>
<dbReference type="SMR" id="B2S2D9"/>
<dbReference type="GeneID" id="93875980"/>
<dbReference type="KEGG" id="tpp:TPASS_0192"/>
<dbReference type="PATRIC" id="fig|455434.6.peg.195"/>
<dbReference type="Proteomes" id="UP000001202">
    <property type="component" value="Chromosome"/>
</dbReference>
<dbReference type="GO" id="GO:0015934">
    <property type="term" value="C:large ribosomal subunit"/>
    <property type="evidence" value="ECO:0007669"/>
    <property type="project" value="InterPro"/>
</dbReference>
<dbReference type="GO" id="GO:0019843">
    <property type="term" value="F:rRNA binding"/>
    <property type="evidence" value="ECO:0007669"/>
    <property type="project" value="UniProtKB-UniRule"/>
</dbReference>
<dbReference type="GO" id="GO:0003735">
    <property type="term" value="F:structural constituent of ribosome"/>
    <property type="evidence" value="ECO:0007669"/>
    <property type="project" value="InterPro"/>
</dbReference>
<dbReference type="GO" id="GO:0016740">
    <property type="term" value="F:transferase activity"/>
    <property type="evidence" value="ECO:0007669"/>
    <property type="project" value="InterPro"/>
</dbReference>
<dbReference type="GO" id="GO:0002181">
    <property type="term" value="P:cytoplasmic translation"/>
    <property type="evidence" value="ECO:0007669"/>
    <property type="project" value="TreeGrafter"/>
</dbReference>
<dbReference type="FunFam" id="2.30.30.30:FF:000001">
    <property type="entry name" value="50S ribosomal protein L2"/>
    <property type="match status" value="1"/>
</dbReference>
<dbReference type="FunFam" id="4.10.950.10:FF:000001">
    <property type="entry name" value="50S ribosomal protein L2"/>
    <property type="match status" value="1"/>
</dbReference>
<dbReference type="Gene3D" id="2.30.30.30">
    <property type="match status" value="1"/>
</dbReference>
<dbReference type="Gene3D" id="2.40.50.140">
    <property type="entry name" value="Nucleic acid-binding proteins"/>
    <property type="match status" value="1"/>
</dbReference>
<dbReference type="Gene3D" id="4.10.950.10">
    <property type="entry name" value="Ribosomal protein L2, domain 3"/>
    <property type="match status" value="1"/>
</dbReference>
<dbReference type="HAMAP" id="MF_01320_B">
    <property type="entry name" value="Ribosomal_uL2_B"/>
    <property type="match status" value="1"/>
</dbReference>
<dbReference type="InterPro" id="IPR012340">
    <property type="entry name" value="NA-bd_OB-fold"/>
</dbReference>
<dbReference type="InterPro" id="IPR014722">
    <property type="entry name" value="Rib_uL2_dom2"/>
</dbReference>
<dbReference type="InterPro" id="IPR002171">
    <property type="entry name" value="Ribosomal_uL2"/>
</dbReference>
<dbReference type="InterPro" id="IPR005880">
    <property type="entry name" value="Ribosomal_uL2_bac/org-type"/>
</dbReference>
<dbReference type="InterPro" id="IPR022669">
    <property type="entry name" value="Ribosomal_uL2_C"/>
</dbReference>
<dbReference type="InterPro" id="IPR014726">
    <property type="entry name" value="Ribosomal_uL2_dom3"/>
</dbReference>
<dbReference type="InterPro" id="IPR022666">
    <property type="entry name" value="Ribosomal_uL2_RNA-bd_dom"/>
</dbReference>
<dbReference type="InterPro" id="IPR008991">
    <property type="entry name" value="Translation_prot_SH3-like_sf"/>
</dbReference>
<dbReference type="NCBIfam" id="TIGR01171">
    <property type="entry name" value="rplB_bact"/>
    <property type="match status" value="1"/>
</dbReference>
<dbReference type="PANTHER" id="PTHR13691:SF5">
    <property type="entry name" value="LARGE RIBOSOMAL SUBUNIT PROTEIN UL2M"/>
    <property type="match status" value="1"/>
</dbReference>
<dbReference type="PANTHER" id="PTHR13691">
    <property type="entry name" value="RIBOSOMAL PROTEIN L2"/>
    <property type="match status" value="1"/>
</dbReference>
<dbReference type="Pfam" id="PF00181">
    <property type="entry name" value="Ribosomal_L2"/>
    <property type="match status" value="1"/>
</dbReference>
<dbReference type="Pfam" id="PF03947">
    <property type="entry name" value="Ribosomal_L2_C"/>
    <property type="match status" value="1"/>
</dbReference>
<dbReference type="PIRSF" id="PIRSF002158">
    <property type="entry name" value="Ribosomal_L2"/>
    <property type="match status" value="1"/>
</dbReference>
<dbReference type="SMART" id="SM01383">
    <property type="entry name" value="Ribosomal_L2"/>
    <property type="match status" value="1"/>
</dbReference>
<dbReference type="SMART" id="SM01382">
    <property type="entry name" value="Ribosomal_L2_C"/>
    <property type="match status" value="1"/>
</dbReference>
<dbReference type="SUPFAM" id="SSF50249">
    <property type="entry name" value="Nucleic acid-binding proteins"/>
    <property type="match status" value="1"/>
</dbReference>
<dbReference type="SUPFAM" id="SSF50104">
    <property type="entry name" value="Translation proteins SH3-like domain"/>
    <property type="match status" value="1"/>
</dbReference>
<organism>
    <name type="scientific">Treponema pallidum subsp. pallidum (strain SS14)</name>
    <dbReference type="NCBI Taxonomy" id="455434"/>
    <lineage>
        <taxon>Bacteria</taxon>
        <taxon>Pseudomonadati</taxon>
        <taxon>Spirochaetota</taxon>
        <taxon>Spirochaetia</taxon>
        <taxon>Spirochaetales</taxon>
        <taxon>Treponemataceae</taxon>
        <taxon>Treponema</taxon>
    </lineage>
</organism>
<feature type="chain" id="PRO_1000141635" description="Large ribosomal subunit protein uL2">
    <location>
        <begin position="1"/>
        <end position="273"/>
    </location>
</feature>
<feature type="region of interest" description="Disordered" evidence="2">
    <location>
        <begin position="28"/>
        <end position="55"/>
    </location>
</feature>
<feature type="region of interest" description="Disordered" evidence="2">
    <location>
        <begin position="222"/>
        <end position="273"/>
    </location>
</feature>
<feature type="compositionally biased region" description="Basic residues" evidence="2">
    <location>
        <begin position="255"/>
        <end position="273"/>
    </location>
</feature>
<proteinExistence type="inferred from homology"/>
<reference key="1">
    <citation type="journal article" date="2008" name="BMC Microbiol.">
        <title>Complete genome sequence of Treponema pallidum ssp. pallidum strain SS14 determined with oligonucleotide arrays.</title>
        <authorList>
            <person name="Matejkova P."/>
            <person name="Strouhal M."/>
            <person name="Smajs D."/>
            <person name="Norris S.J."/>
            <person name="Palzkill T."/>
            <person name="Petrosino J.F."/>
            <person name="Sodergren E."/>
            <person name="Norton J.E."/>
            <person name="Singh J."/>
            <person name="Richmond T.A."/>
            <person name="Molla M.N."/>
            <person name="Albert T.J."/>
            <person name="Weinstock G.M."/>
        </authorList>
    </citation>
    <scope>NUCLEOTIDE SEQUENCE [LARGE SCALE GENOMIC DNA]</scope>
    <source>
        <strain>SS14</strain>
    </source>
</reference>
<accession>B2S2D9</accession>
<comment type="function">
    <text evidence="1">One of the primary rRNA binding proteins. Required for association of the 30S and 50S subunits to form the 70S ribosome, for tRNA binding and peptide bond formation. It has been suggested to have peptidyltransferase activity; this is somewhat controversial. Makes several contacts with the 16S rRNA in the 70S ribosome.</text>
</comment>
<comment type="subunit">
    <text evidence="1">Part of the 50S ribosomal subunit. Forms a bridge to the 30S subunit in the 70S ribosome.</text>
</comment>
<comment type="similarity">
    <text evidence="1">Belongs to the universal ribosomal protein uL2 family.</text>
</comment>
<sequence length="273" mass="29867">MALKMYRPMTAGLRGRVDLCRAELTARTPEKSLTRGKPAKAGRGAGGRISVRHRGGGHKRRYRDIDFKRDLHDIPGTVKTIEYDPNRSVNIALVFYANGQKRYILAPKGLKVGQQVVSGEKVPLEPANALPLGVIPVGFTVHNVELTIGKGGQIARSAGTRAVIAAKDGGYVMLRLPSGEARLVHRRCYATIGELGNEDHMNTALGKAGRARWRGVRPTVRGMAMNPVDHPLGGGEGRGKGRNPVTPWGQPCRGYKTRKKRRVSDRFIVSKRK</sequence>
<evidence type="ECO:0000255" key="1">
    <source>
        <dbReference type="HAMAP-Rule" id="MF_01320"/>
    </source>
</evidence>
<evidence type="ECO:0000256" key="2">
    <source>
        <dbReference type="SAM" id="MobiDB-lite"/>
    </source>
</evidence>
<evidence type="ECO:0000305" key="3"/>
<gene>
    <name evidence="1" type="primary">rplB</name>
    <name type="ordered locus">TPASS_0192</name>
</gene>
<protein>
    <recommendedName>
        <fullName evidence="1">Large ribosomal subunit protein uL2</fullName>
    </recommendedName>
    <alternativeName>
        <fullName evidence="3">50S ribosomal protein L2</fullName>
    </alternativeName>
</protein>
<name>RL2_TREPS</name>